<protein>
    <recommendedName>
        <fullName evidence="9">S-(hydroxymethyl)glutathione dehydrogenase</fullName>
        <ecNumber evidence="7">1.1.1.284</ecNumber>
    </recommendedName>
    <alternativeName>
        <fullName evidence="10">Alcohol dehydrogenase SFA</fullName>
        <ecNumber evidence="8">1.1.1.1</ecNumber>
    </alternativeName>
    <alternativeName>
        <fullName evidence="10">Glutathione-dependent formaldehyde dehydrogenase</fullName>
        <shortName evidence="11">FALDH</shortName>
        <shortName evidence="11">FDH</shortName>
        <shortName evidence="11">FLD</shortName>
        <shortName evidence="11">GSH-FDH</shortName>
        <ecNumber evidence="8">1.1.1.-</ecNumber>
    </alternativeName>
</protein>
<organism>
    <name type="scientific">Saccharomyces cerevisiae (strain ATCC 204508 / S288c)</name>
    <name type="common">Baker's yeast</name>
    <dbReference type="NCBI Taxonomy" id="559292"/>
    <lineage>
        <taxon>Eukaryota</taxon>
        <taxon>Fungi</taxon>
        <taxon>Dikarya</taxon>
        <taxon>Ascomycota</taxon>
        <taxon>Saccharomycotina</taxon>
        <taxon>Saccharomycetes</taxon>
        <taxon>Saccharomycetales</taxon>
        <taxon>Saccharomycetaceae</taxon>
        <taxon>Saccharomyces</taxon>
    </lineage>
</organism>
<evidence type="ECO:0000250" key="1">
    <source>
        <dbReference type="UniProtKB" id="P06525"/>
    </source>
</evidence>
<evidence type="ECO:0000250" key="2">
    <source>
        <dbReference type="UniProtKB" id="Q96533"/>
    </source>
</evidence>
<evidence type="ECO:0000269" key="3">
    <source>
    </source>
</evidence>
<evidence type="ECO:0000269" key="4">
    <source>
    </source>
</evidence>
<evidence type="ECO:0000269" key="5">
    <source>
    </source>
</evidence>
<evidence type="ECO:0000269" key="6">
    <source>
    </source>
</evidence>
<evidence type="ECO:0000269" key="7">
    <source>
    </source>
</evidence>
<evidence type="ECO:0000269" key="8">
    <source>
    </source>
</evidence>
<evidence type="ECO:0000303" key="9">
    <source>
    </source>
</evidence>
<evidence type="ECO:0000303" key="10">
    <source>
    </source>
</evidence>
<evidence type="ECO:0000305" key="11"/>
<evidence type="ECO:0000305" key="12">
    <source>
    </source>
</evidence>
<name>FADH_YEAST</name>
<feature type="initiator methionine" description="Removed" evidence="7">
    <location>
        <position position="1"/>
    </location>
</feature>
<feature type="chain" id="PRO_0000160785" description="S-(hydroxymethyl)glutathione dehydrogenase">
    <location>
        <begin position="2"/>
        <end position="386"/>
    </location>
</feature>
<feature type="binding site" evidence="2">
    <location>
        <position position="49"/>
    </location>
    <ligand>
        <name>Zn(2+)</name>
        <dbReference type="ChEBI" id="CHEBI:29105"/>
        <label>1</label>
        <note>catalytic</note>
    </ligand>
</feature>
<feature type="binding site" evidence="2">
    <location>
        <position position="50"/>
    </location>
    <ligand>
        <name>NAD(+)</name>
        <dbReference type="ChEBI" id="CHEBI:57540"/>
    </ligand>
</feature>
<feature type="binding site" evidence="2">
    <location>
        <position position="71"/>
    </location>
    <ligand>
        <name>Zn(2+)</name>
        <dbReference type="ChEBI" id="CHEBI:29105"/>
        <label>1</label>
        <note>catalytic</note>
    </ligand>
</feature>
<feature type="binding site" evidence="2">
    <location>
        <position position="72"/>
    </location>
    <ligand>
        <name>Zn(2+)</name>
        <dbReference type="ChEBI" id="CHEBI:29105"/>
        <label>1</label>
        <note>catalytic</note>
    </ligand>
</feature>
<feature type="binding site" evidence="2">
    <location>
        <position position="101"/>
    </location>
    <ligand>
        <name>Zn(2+)</name>
        <dbReference type="ChEBI" id="CHEBI:29105"/>
        <label>2</label>
    </ligand>
</feature>
<feature type="binding site" evidence="2">
    <location>
        <position position="104"/>
    </location>
    <ligand>
        <name>Zn(2+)</name>
        <dbReference type="ChEBI" id="CHEBI:29105"/>
        <label>2</label>
    </ligand>
</feature>
<feature type="binding site" evidence="2">
    <location>
        <position position="107"/>
    </location>
    <ligand>
        <name>Zn(2+)</name>
        <dbReference type="ChEBI" id="CHEBI:29105"/>
        <label>2</label>
    </ligand>
</feature>
<feature type="binding site" evidence="2">
    <location>
        <position position="115"/>
    </location>
    <ligand>
        <name>Zn(2+)</name>
        <dbReference type="ChEBI" id="CHEBI:29105"/>
        <label>2</label>
    </ligand>
</feature>
<feature type="binding site" evidence="2">
    <location>
        <position position="179"/>
    </location>
    <ligand>
        <name>Zn(2+)</name>
        <dbReference type="ChEBI" id="CHEBI:29105"/>
        <label>1</label>
        <note>catalytic</note>
    </ligand>
</feature>
<feature type="binding site" evidence="2">
    <location>
        <begin position="204"/>
        <end position="209"/>
    </location>
    <ligand>
        <name>NAD(+)</name>
        <dbReference type="ChEBI" id="CHEBI:57540"/>
    </ligand>
</feature>
<feature type="binding site" evidence="2">
    <location>
        <position position="228"/>
    </location>
    <ligand>
        <name>NAD(+)</name>
        <dbReference type="ChEBI" id="CHEBI:57540"/>
    </ligand>
</feature>
<feature type="binding site" evidence="2">
    <location>
        <begin position="300"/>
        <end position="302"/>
    </location>
    <ligand>
        <name>NAD(+)</name>
        <dbReference type="ChEBI" id="CHEBI:57540"/>
    </ligand>
</feature>
<feature type="binding site" evidence="2">
    <location>
        <begin position="325"/>
        <end position="327"/>
    </location>
    <ligand>
        <name>NAD(+)</name>
        <dbReference type="ChEBI" id="CHEBI:57540"/>
    </ligand>
</feature>
<feature type="modified residue" description="N-acetylserine" evidence="12">
    <location>
        <position position="2"/>
    </location>
</feature>
<reference key="1">
    <citation type="journal article" date="1993" name="Mol. Gen. Genet.">
        <title>Molecular structure and genetic regulation of SFA, a gene responsible for resistance to formaldehyde in Saccharomyces cerevisiae, and characterization of its protein product.</title>
        <authorList>
            <person name="Wehner E.P."/>
            <person name="Rao E."/>
            <person name="Brendel M."/>
        </authorList>
    </citation>
    <scope>NUCLEOTIDE SEQUENCE [GENOMIC DNA]</scope>
    <scope>FUNCTION</scope>
    <scope>CATALYTIC ACTIVITY</scope>
    <scope>BIOPHYSICOCHEMICAL PROPERTIES</scope>
    <source>
        <strain>ATCC 38626 / AH22 / NRRL Y-12843</strain>
    </source>
</reference>
<reference key="2">
    <citation type="journal article" date="1997" name="Nature">
        <title>The nucleotide sequence of Saccharomyces cerevisiae chromosome IV.</title>
        <authorList>
            <person name="Jacq C."/>
            <person name="Alt-Moerbe J."/>
            <person name="Andre B."/>
            <person name="Arnold W."/>
            <person name="Bahr A."/>
            <person name="Ballesta J.P.G."/>
            <person name="Bargues M."/>
            <person name="Baron L."/>
            <person name="Becker A."/>
            <person name="Biteau N."/>
            <person name="Bloecker H."/>
            <person name="Blugeon C."/>
            <person name="Boskovic J."/>
            <person name="Brandt P."/>
            <person name="Brueckner M."/>
            <person name="Buitrago M.J."/>
            <person name="Coster F."/>
            <person name="Delaveau T."/>
            <person name="del Rey F."/>
            <person name="Dujon B."/>
            <person name="Eide L.G."/>
            <person name="Garcia-Cantalejo J.M."/>
            <person name="Goffeau A."/>
            <person name="Gomez-Peris A."/>
            <person name="Granotier C."/>
            <person name="Hanemann V."/>
            <person name="Hankeln T."/>
            <person name="Hoheisel J.D."/>
            <person name="Jaeger W."/>
            <person name="Jimenez A."/>
            <person name="Jonniaux J.-L."/>
            <person name="Kraemer C."/>
            <person name="Kuester H."/>
            <person name="Laamanen P."/>
            <person name="Legros Y."/>
            <person name="Louis E.J."/>
            <person name="Moeller-Rieker S."/>
            <person name="Monnet A."/>
            <person name="Moro M."/>
            <person name="Mueller-Auer S."/>
            <person name="Nussbaumer B."/>
            <person name="Paricio N."/>
            <person name="Paulin L."/>
            <person name="Perea J."/>
            <person name="Perez-Alonso M."/>
            <person name="Perez-Ortin J.E."/>
            <person name="Pohl T.M."/>
            <person name="Prydz H."/>
            <person name="Purnelle B."/>
            <person name="Rasmussen S.W."/>
            <person name="Remacha M.A."/>
            <person name="Revuelta J.L."/>
            <person name="Rieger M."/>
            <person name="Salom D."/>
            <person name="Saluz H.P."/>
            <person name="Saiz J.E."/>
            <person name="Saren A.-M."/>
            <person name="Schaefer M."/>
            <person name="Scharfe M."/>
            <person name="Schmidt E.R."/>
            <person name="Schneider C."/>
            <person name="Scholler P."/>
            <person name="Schwarz S."/>
            <person name="Soler-Mira A."/>
            <person name="Urrestarazu L.A."/>
            <person name="Verhasselt P."/>
            <person name="Vissers S."/>
            <person name="Voet M."/>
            <person name="Volckaert G."/>
            <person name="Wagner G."/>
            <person name="Wambutt R."/>
            <person name="Wedler E."/>
            <person name="Wedler H."/>
            <person name="Woelfl S."/>
            <person name="Harris D.E."/>
            <person name="Bowman S."/>
            <person name="Brown D."/>
            <person name="Churcher C.M."/>
            <person name="Connor R."/>
            <person name="Dedman K."/>
            <person name="Gentles S."/>
            <person name="Hamlin N."/>
            <person name="Hunt S."/>
            <person name="Jones L."/>
            <person name="McDonald S."/>
            <person name="Murphy L.D."/>
            <person name="Niblett D."/>
            <person name="Odell C."/>
            <person name="Oliver K."/>
            <person name="Rajandream M.A."/>
            <person name="Richards C."/>
            <person name="Shore L."/>
            <person name="Walsh S.V."/>
            <person name="Barrell B.G."/>
            <person name="Dietrich F.S."/>
            <person name="Mulligan J.T."/>
            <person name="Allen E."/>
            <person name="Araujo R."/>
            <person name="Aviles E."/>
            <person name="Berno A."/>
            <person name="Carpenter J."/>
            <person name="Chen E."/>
            <person name="Cherry J.M."/>
            <person name="Chung E."/>
            <person name="Duncan M."/>
            <person name="Hunicke-Smith S."/>
            <person name="Hyman R.W."/>
            <person name="Komp C."/>
            <person name="Lashkari D."/>
            <person name="Lew H."/>
            <person name="Lin D."/>
            <person name="Mosedale D."/>
            <person name="Nakahara K."/>
            <person name="Namath A."/>
            <person name="Oefner P."/>
            <person name="Oh C."/>
            <person name="Petel F.X."/>
            <person name="Roberts D."/>
            <person name="Schramm S."/>
            <person name="Schroeder M."/>
            <person name="Shogren T."/>
            <person name="Shroff N."/>
            <person name="Winant A."/>
            <person name="Yelton M.A."/>
            <person name="Botstein D."/>
            <person name="Davis R.W."/>
            <person name="Johnston M."/>
            <person name="Andrews S."/>
            <person name="Brinkman R."/>
            <person name="Cooper J."/>
            <person name="Ding H."/>
            <person name="Du Z."/>
            <person name="Favello A."/>
            <person name="Fulton L."/>
            <person name="Gattung S."/>
            <person name="Greco T."/>
            <person name="Hallsworth K."/>
            <person name="Hawkins J."/>
            <person name="Hillier L.W."/>
            <person name="Jier M."/>
            <person name="Johnson D."/>
            <person name="Johnston L."/>
            <person name="Kirsten J."/>
            <person name="Kucaba T."/>
            <person name="Langston Y."/>
            <person name="Latreille P."/>
            <person name="Le T."/>
            <person name="Mardis E."/>
            <person name="Menezes S."/>
            <person name="Miller N."/>
            <person name="Nhan M."/>
            <person name="Pauley A."/>
            <person name="Peluso D."/>
            <person name="Rifkin L."/>
            <person name="Riles L."/>
            <person name="Taich A."/>
            <person name="Trevaskis E."/>
            <person name="Vignati D."/>
            <person name="Wilcox L."/>
            <person name="Wohldman P."/>
            <person name="Vaudin M."/>
            <person name="Wilson R."/>
            <person name="Waterston R."/>
            <person name="Albermann K."/>
            <person name="Hani J."/>
            <person name="Heumann K."/>
            <person name="Kleine K."/>
            <person name="Mewes H.-W."/>
            <person name="Zollner A."/>
            <person name="Zaccaria P."/>
        </authorList>
    </citation>
    <scope>NUCLEOTIDE SEQUENCE [LARGE SCALE GENOMIC DNA]</scope>
    <source>
        <strain>ATCC 204508 / S288c</strain>
    </source>
</reference>
<reference key="3">
    <citation type="journal article" date="2014" name="G3 (Bethesda)">
        <title>The reference genome sequence of Saccharomyces cerevisiae: Then and now.</title>
        <authorList>
            <person name="Engel S.R."/>
            <person name="Dietrich F.S."/>
            <person name="Fisk D.G."/>
            <person name="Binkley G."/>
            <person name="Balakrishnan R."/>
            <person name="Costanzo M.C."/>
            <person name="Dwight S.S."/>
            <person name="Hitz B.C."/>
            <person name="Karra K."/>
            <person name="Nash R.S."/>
            <person name="Weng S."/>
            <person name="Wong E.D."/>
            <person name="Lloyd P."/>
            <person name="Skrzypek M.S."/>
            <person name="Miyasato S.R."/>
            <person name="Simison M."/>
            <person name="Cherry J.M."/>
        </authorList>
    </citation>
    <scope>GENOME REANNOTATION</scope>
    <source>
        <strain>ATCC 204508 / S288c</strain>
    </source>
</reference>
<reference key="4">
    <citation type="journal article" date="1995" name="FEBS Lett.">
        <title>Class III alcohol dehydrogenase from Saccharomyces cerevisiae: structural and enzymatic features differ toward the human/mammalian forms in a manner consistent with functional needs in formaldehyde detoxication.</title>
        <authorList>
            <person name="Fernandez M.R."/>
            <person name="Biosca J.A."/>
            <person name="Norin A."/>
            <person name="Joernvall H."/>
            <person name="Pares X."/>
        </authorList>
    </citation>
    <scope>PROTEIN SEQUENCE OF 2-5 AND 383-386</scope>
    <scope>ACETYLATION AT SER-2</scope>
    <scope>FUNCTION</scope>
    <scope>CATALYTIC ACTIVITY</scope>
    <scope>BIOPHYSICOCHEMICAL PROPERTIES</scope>
</reference>
<reference key="5">
    <citation type="journal article" date="2003" name="Nature">
        <title>Global analysis of protein localization in budding yeast.</title>
        <authorList>
            <person name="Huh W.-K."/>
            <person name="Falvo J.V."/>
            <person name="Gerke L.C."/>
            <person name="Carroll A.S."/>
            <person name="Howson R.W."/>
            <person name="Weissman J.S."/>
            <person name="O'Shea E.K."/>
        </authorList>
    </citation>
    <scope>SUBCELLULAR LOCATION [LARGE SCALE ANALYSIS]</scope>
</reference>
<reference key="6">
    <citation type="journal article" date="2006" name="J. Proteome Res.">
        <title>Toward the complete yeast mitochondrial proteome: multidimensional separation techniques for mitochondrial proteomics.</title>
        <authorList>
            <person name="Reinders J."/>
            <person name="Zahedi R.P."/>
            <person name="Pfanner N."/>
            <person name="Meisinger C."/>
            <person name="Sickmann A."/>
        </authorList>
    </citation>
    <scope>SUBCELLULAR LOCATION [LARGE SCALE ANALYSIS]</scope>
</reference>
<reference key="7">
    <citation type="journal article" date="2003" name="Nature">
        <title>Global analysis of protein expression in yeast.</title>
        <authorList>
            <person name="Ghaemmaghami S."/>
            <person name="Huh W.-K."/>
            <person name="Bower K."/>
            <person name="Howson R.W."/>
            <person name="Belle A."/>
            <person name="Dephoure N."/>
            <person name="O'Shea E.K."/>
            <person name="Weissman J.S."/>
        </authorList>
    </citation>
    <scope>LEVEL OF PROTEIN EXPRESSION [LARGE SCALE ANALYSIS]</scope>
</reference>
<reference key="8">
    <citation type="journal article" date="2001" name="Nature">
        <title>A metabolic enzyme for S-nitrosothiol conserved from bacteria to humans.</title>
        <authorList>
            <person name="Liu L."/>
            <person name="Hausladen A."/>
            <person name="Zeng M."/>
            <person name="Que L."/>
            <person name="Heitman J."/>
            <person name="Stamler J.S."/>
        </authorList>
    </citation>
    <scope>FUNCTION</scope>
    <scope>CATALYTIC ACTIVITY</scope>
    <scope>DISRUPTION PHENOTYPE</scope>
</reference>
<keyword id="KW-0007">Acetylation</keyword>
<keyword id="KW-0963">Cytoplasm</keyword>
<keyword id="KW-0903">Direct protein sequencing</keyword>
<keyword id="KW-0479">Metal-binding</keyword>
<keyword id="KW-0496">Mitochondrion</keyword>
<keyword id="KW-0520">NAD</keyword>
<keyword id="KW-0560">Oxidoreductase</keyword>
<keyword id="KW-1185">Reference proteome</keyword>
<keyword id="KW-0862">Zinc</keyword>
<proteinExistence type="evidence at protein level"/>
<comment type="function">
    <text evidence="3 7 8">Oxidizes long-chain alcohols and, in the presence of glutathione, is able to oxidize formaldehyde (PubMed:8483449). Is responsible for yeast resistance to formaldehyde (PubMed:7649298). Also acts as a S-nitroso-glutathione reductase by catalyzing the NADH-dependent reduction of S-nitrosoglutathione, thereby regulating protein S-nitrosylation (PubMed:11260719).</text>
</comment>
<comment type="catalytic activity">
    <reaction evidence="8">
        <text>a primary alcohol + NAD(+) = an aldehyde + NADH + H(+)</text>
        <dbReference type="Rhea" id="RHEA:10736"/>
        <dbReference type="ChEBI" id="CHEBI:15378"/>
        <dbReference type="ChEBI" id="CHEBI:15734"/>
        <dbReference type="ChEBI" id="CHEBI:17478"/>
        <dbReference type="ChEBI" id="CHEBI:57540"/>
        <dbReference type="ChEBI" id="CHEBI:57945"/>
        <dbReference type="EC" id="1.1.1.1"/>
    </reaction>
</comment>
<comment type="catalytic activity">
    <reaction evidence="8">
        <text>a secondary alcohol + NAD(+) = a ketone + NADH + H(+)</text>
        <dbReference type="Rhea" id="RHEA:10740"/>
        <dbReference type="ChEBI" id="CHEBI:15378"/>
        <dbReference type="ChEBI" id="CHEBI:17087"/>
        <dbReference type="ChEBI" id="CHEBI:35681"/>
        <dbReference type="ChEBI" id="CHEBI:57540"/>
        <dbReference type="ChEBI" id="CHEBI:57945"/>
        <dbReference type="EC" id="1.1.1.1"/>
    </reaction>
</comment>
<comment type="catalytic activity">
    <reaction evidence="7">
        <text>S-(hydroxymethyl)glutathione + NADP(+) = S-formylglutathione + NADPH + H(+)</text>
        <dbReference type="Rhea" id="RHEA:19981"/>
        <dbReference type="ChEBI" id="CHEBI:15378"/>
        <dbReference type="ChEBI" id="CHEBI:57688"/>
        <dbReference type="ChEBI" id="CHEBI:57783"/>
        <dbReference type="ChEBI" id="CHEBI:58349"/>
        <dbReference type="ChEBI" id="CHEBI:58758"/>
        <dbReference type="EC" id="1.1.1.284"/>
    </reaction>
</comment>
<comment type="catalytic activity">
    <reaction evidence="1">
        <text>S-(hydroxymethyl)glutathione + NAD(+) = S-formylglutathione + NADH + H(+)</text>
        <dbReference type="Rhea" id="RHEA:19985"/>
        <dbReference type="ChEBI" id="CHEBI:15378"/>
        <dbReference type="ChEBI" id="CHEBI:57540"/>
        <dbReference type="ChEBI" id="CHEBI:57688"/>
        <dbReference type="ChEBI" id="CHEBI:57945"/>
        <dbReference type="ChEBI" id="CHEBI:58758"/>
        <dbReference type="EC" id="1.1.1.284"/>
    </reaction>
</comment>
<comment type="catalytic activity">
    <reaction evidence="3">
        <text>S-nitrosoglutathione + NADH + H(+) = S-(hydroxysulfenamide)glutathione + NAD(+)</text>
        <dbReference type="Rhea" id="RHEA:78371"/>
        <dbReference type="ChEBI" id="CHEBI:15378"/>
        <dbReference type="ChEBI" id="CHEBI:57540"/>
        <dbReference type="ChEBI" id="CHEBI:57945"/>
        <dbReference type="ChEBI" id="CHEBI:145544"/>
        <dbReference type="ChEBI" id="CHEBI:229723"/>
    </reaction>
</comment>
<comment type="cofactor">
    <cofactor evidence="1">
        <name>Zn(2+)</name>
        <dbReference type="ChEBI" id="CHEBI:29105"/>
    </cofactor>
    <text evidence="1">Binds 2 Zn(2+) ions per subunit.</text>
</comment>
<comment type="biophysicochemical properties">
    <kinetics>
        <KM evidence="7">0.04 mM for S-(hydroxymethyl)glutathione (at pH 8)</KM>
        <KM evidence="8">0.34 mM for formaldehyde (at pH 8)</KM>
        <KM evidence="8">1 mM for methylglyoxal (at pH 9.6)</KM>
        <KM evidence="8">150 mM for butanol (at pH 9.6)</KM>
        <KM evidence="8">36 mM for pentanol (at pH 9.6)</KM>
        <KM evidence="8">19 mM for hexanol (at pH 9.6)</KM>
        <KM evidence="8">2 mM for octanol (at pH 9.6)</KM>
        <KM evidence="7">2.4 mM for octanol (at pH 10)</KM>
        <KM evidence="7">7.2 mM for 10-hydroxy-decanoate (at pH 8)</KM>
        <KM evidence="8">4 mM for 12-hydroxy-dodecanoate (at pH 9.6)</KM>
        <KM evidence="7">1.8 mM for 12-hydroxy-dodecanoate (at pH 8)</KM>
        <KM evidence="8">271 mM for allylalcohol (at pH 9.6)</KM>
        <KM evidence="8">0.09 mM for NAD(+) (at pH 9.6)</KM>
        <KM evidence="7">0.14 mM for NAD(+) (at pH 8)</KM>
        <KM evidence="8">0.11 mM for glutathione (at pH 9.6)</KM>
    </kinetics>
</comment>
<comment type="subcellular location">
    <subcellularLocation>
        <location evidence="4">Cytoplasm</location>
    </subcellularLocation>
    <subcellularLocation>
        <location evidence="6">Mitochondrion</location>
    </subcellularLocation>
</comment>
<comment type="induction">
    <text evidence="8">By formaldehyde, ethanol and methyl methanesulphonate.</text>
</comment>
<comment type="disruption phenotype">
    <text evidence="3">Accumulation of S-nitrosylated proteins.</text>
</comment>
<comment type="miscellaneous">
    <text evidence="8">Requires GSH for oxidation of formaldehyde or of methylglyoxal, while oxidation of long-chain alcohols is independent of GSH and enzyme activity improves with chain length.</text>
</comment>
<comment type="miscellaneous">
    <text evidence="5">Present with 8370 molecules/cell in log phase SD medium.</text>
</comment>
<comment type="similarity">
    <text evidence="11">Belongs to the zinc-containing alcohol dehydrogenase family. Class-III subfamily.</text>
</comment>
<dbReference type="EC" id="1.1.1.284" evidence="7"/>
<dbReference type="EC" id="1.1.1.1" evidence="8"/>
<dbReference type="EC" id="1.1.1.-" evidence="8"/>
<dbReference type="EMBL" id="X68020">
    <property type="protein sequence ID" value="CAA48161.1"/>
    <property type="molecule type" value="Genomic_DNA"/>
</dbReference>
<dbReference type="EMBL" id="Z67750">
    <property type="protein sequence ID" value="CAA91578.1"/>
    <property type="molecule type" value="Genomic_DNA"/>
</dbReference>
<dbReference type="EMBL" id="Z74216">
    <property type="protein sequence ID" value="CAA98742.1"/>
    <property type="molecule type" value="Genomic_DNA"/>
</dbReference>
<dbReference type="EMBL" id="BK006938">
    <property type="protein sequence ID" value="DAA11693.1"/>
    <property type="molecule type" value="Genomic_DNA"/>
</dbReference>
<dbReference type="PIR" id="S31140">
    <property type="entry name" value="S31140"/>
</dbReference>
<dbReference type="RefSeq" id="NP_010113.1">
    <property type="nucleotide sequence ID" value="NM_001180228.1"/>
</dbReference>
<dbReference type="SMR" id="P32771"/>
<dbReference type="BioGRID" id="31897">
    <property type="interactions" value="170"/>
</dbReference>
<dbReference type="DIP" id="DIP-5366N"/>
<dbReference type="FunCoup" id="P32771">
    <property type="interactions" value="934"/>
</dbReference>
<dbReference type="IntAct" id="P32771">
    <property type="interactions" value="5"/>
</dbReference>
<dbReference type="MINT" id="P32771"/>
<dbReference type="STRING" id="4932.YDL168W"/>
<dbReference type="iPTMnet" id="P32771"/>
<dbReference type="PaxDb" id="4932-YDL168W"/>
<dbReference type="PeptideAtlas" id="P32771"/>
<dbReference type="EnsemblFungi" id="YDL168W_mRNA">
    <property type="protein sequence ID" value="YDL168W"/>
    <property type="gene ID" value="YDL168W"/>
</dbReference>
<dbReference type="GeneID" id="851386"/>
<dbReference type="KEGG" id="sce:YDL168W"/>
<dbReference type="AGR" id="SGD:S000002327"/>
<dbReference type="SGD" id="S000002327">
    <property type="gene designation" value="SFA1"/>
</dbReference>
<dbReference type="VEuPathDB" id="FungiDB:YDL168W"/>
<dbReference type="eggNOG" id="KOG0022">
    <property type="taxonomic scope" value="Eukaryota"/>
</dbReference>
<dbReference type="GeneTree" id="ENSGT00970000196190"/>
<dbReference type="HOGENOM" id="CLU_026673_14_0_1"/>
<dbReference type="InParanoid" id="P32771"/>
<dbReference type="OMA" id="IKGRSEM"/>
<dbReference type="OrthoDB" id="417550at2759"/>
<dbReference type="BioCyc" id="MetaCyc:YDL168W-MONOMER"/>
<dbReference type="BioCyc" id="YEAST:YDL168W-MONOMER"/>
<dbReference type="Reactome" id="R-SCE-2161541">
    <property type="pathway name" value="Abacavir metabolism"/>
</dbReference>
<dbReference type="Reactome" id="R-SCE-5365859">
    <property type="pathway name" value="RA biosynthesis pathway"/>
</dbReference>
<dbReference type="Reactome" id="R-SCE-71384">
    <property type="pathway name" value="Ethanol oxidation"/>
</dbReference>
<dbReference type="BioGRID-ORCS" id="851386">
    <property type="hits" value="5 hits in 10 CRISPR screens"/>
</dbReference>
<dbReference type="PRO" id="PR:P32771"/>
<dbReference type="Proteomes" id="UP000002311">
    <property type="component" value="Chromosome IV"/>
</dbReference>
<dbReference type="RNAct" id="P32771">
    <property type="molecule type" value="protein"/>
</dbReference>
<dbReference type="GO" id="GO:0005737">
    <property type="term" value="C:cytoplasm"/>
    <property type="evidence" value="ECO:0007005"/>
    <property type="project" value="SGD"/>
</dbReference>
<dbReference type="GO" id="GO:0005829">
    <property type="term" value="C:cytosol"/>
    <property type="evidence" value="ECO:0000318"/>
    <property type="project" value="GO_Central"/>
</dbReference>
<dbReference type="GO" id="GO:0005739">
    <property type="term" value="C:mitochondrion"/>
    <property type="evidence" value="ECO:0007005"/>
    <property type="project" value="SGD"/>
</dbReference>
<dbReference type="GO" id="GO:0004022">
    <property type="term" value="F:alcohol dehydrogenase (NAD+) activity"/>
    <property type="evidence" value="ECO:0000314"/>
    <property type="project" value="SGD"/>
</dbReference>
<dbReference type="GO" id="GO:0033833">
    <property type="term" value="F:hydroxymethylfurfural reductase (NADH) activity"/>
    <property type="evidence" value="ECO:0000315"/>
    <property type="project" value="SGD"/>
</dbReference>
<dbReference type="GO" id="GO:0106322">
    <property type="term" value="F:S-(hydroxymethyl)glutathione dehydrogenase (NAD+) activity"/>
    <property type="evidence" value="ECO:0007669"/>
    <property type="project" value="RHEA"/>
</dbReference>
<dbReference type="GO" id="GO:0106321">
    <property type="term" value="F:S-(hydroxymethyl)glutathione dehydrogenase (NADP+) activity"/>
    <property type="evidence" value="ECO:0007669"/>
    <property type="project" value="RHEA"/>
</dbReference>
<dbReference type="GO" id="GO:0051903">
    <property type="term" value="F:S-(hydroxymethyl)glutathione dehydrogenase [NAD(P)+] activity"/>
    <property type="evidence" value="ECO:0000314"/>
    <property type="project" value="SGD"/>
</dbReference>
<dbReference type="GO" id="GO:0080007">
    <property type="term" value="F:S-nitrosoglutathione reductase (NADH) activity"/>
    <property type="evidence" value="ECO:0007669"/>
    <property type="project" value="RHEA"/>
</dbReference>
<dbReference type="GO" id="GO:0008270">
    <property type="term" value="F:zinc ion binding"/>
    <property type="evidence" value="ECO:0000318"/>
    <property type="project" value="GO_Central"/>
</dbReference>
<dbReference type="GO" id="GO:0000947">
    <property type="term" value="P:amino acid catabolic process to alcohol via Ehrlich pathway"/>
    <property type="evidence" value="ECO:0000316"/>
    <property type="project" value="SGD"/>
</dbReference>
<dbReference type="GO" id="GO:0046294">
    <property type="term" value="P:formaldehyde catabolic process"/>
    <property type="evidence" value="ECO:0000314"/>
    <property type="project" value="SGD"/>
</dbReference>
<dbReference type="GO" id="GO:0033859">
    <property type="term" value="P:furaldehyde metabolic process"/>
    <property type="evidence" value="ECO:0000315"/>
    <property type="project" value="SGD"/>
</dbReference>
<dbReference type="CDD" id="cd08300">
    <property type="entry name" value="alcohol_DH_class_III"/>
    <property type="match status" value="1"/>
</dbReference>
<dbReference type="FunFam" id="3.40.50.720:FF:000003">
    <property type="entry name" value="S-(hydroxymethyl)glutathione dehydrogenase"/>
    <property type="match status" value="1"/>
</dbReference>
<dbReference type="FunFam" id="3.90.180.10:FF:000001">
    <property type="entry name" value="S-(hydroxymethyl)glutathione dehydrogenase"/>
    <property type="match status" value="1"/>
</dbReference>
<dbReference type="Gene3D" id="3.90.180.10">
    <property type="entry name" value="Medium-chain alcohol dehydrogenases, catalytic domain"/>
    <property type="match status" value="1"/>
</dbReference>
<dbReference type="Gene3D" id="3.40.50.720">
    <property type="entry name" value="NAD(P)-binding Rossmann-like Domain"/>
    <property type="match status" value="1"/>
</dbReference>
<dbReference type="InterPro" id="IPR013149">
    <property type="entry name" value="ADH-like_C"/>
</dbReference>
<dbReference type="InterPro" id="IPR013154">
    <property type="entry name" value="ADH-like_N"/>
</dbReference>
<dbReference type="InterPro" id="IPR014183">
    <property type="entry name" value="ADH_3"/>
</dbReference>
<dbReference type="InterPro" id="IPR002328">
    <property type="entry name" value="ADH_Zn_CS"/>
</dbReference>
<dbReference type="InterPro" id="IPR011032">
    <property type="entry name" value="GroES-like_sf"/>
</dbReference>
<dbReference type="InterPro" id="IPR036291">
    <property type="entry name" value="NAD(P)-bd_dom_sf"/>
</dbReference>
<dbReference type="NCBIfam" id="TIGR02818">
    <property type="entry name" value="adh_III_F_hyde"/>
    <property type="match status" value="1"/>
</dbReference>
<dbReference type="PANTHER" id="PTHR43880">
    <property type="entry name" value="ALCOHOL DEHYDROGENASE"/>
    <property type="match status" value="1"/>
</dbReference>
<dbReference type="PANTHER" id="PTHR43880:SF12">
    <property type="entry name" value="ALCOHOL DEHYDROGENASE CLASS-3"/>
    <property type="match status" value="1"/>
</dbReference>
<dbReference type="Pfam" id="PF08240">
    <property type="entry name" value="ADH_N"/>
    <property type="match status" value="1"/>
</dbReference>
<dbReference type="Pfam" id="PF00107">
    <property type="entry name" value="ADH_zinc_N"/>
    <property type="match status" value="1"/>
</dbReference>
<dbReference type="SUPFAM" id="SSF50129">
    <property type="entry name" value="GroES-like"/>
    <property type="match status" value="2"/>
</dbReference>
<dbReference type="SUPFAM" id="SSF51735">
    <property type="entry name" value="NAD(P)-binding Rossmann-fold domains"/>
    <property type="match status" value="1"/>
</dbReference>
<dbReference type="PROSITE" id="PS00059">
    <property type="entry name" value="ADH_ZINC"/>
    <property type="match status" value="1"/>
</dbReference>
<accession>P32771</accession>
<accession>D6VRI3</accession>
<sequence>MSAATVGKPIKCIAAVAYDAKKPLSVEEITVDAPKAHEVRIKIEYTAVCHTDAYTLSGSDPEGLFPCVLGHEGAGIVESVGDDVITVKPGDHVIALYTAECGKCKFCTSGKTNLCGAVRATQGKGVMPDGTTRFHNAKGEDIYHFMGCSTFSEYTVVADVSVVAIDPKAPLDAACLLGCGVTTGFGAALKTANVQKGDTVAVFGCGTVGLSVIQGAKLRGASKIIAIDINNKKKQYCSQFGATDFVNPKEDLAKDQTIVEKLIEMTDGGLDFTFDCTGNTKIMRDALEACHKGWGQSIIIGVAAAGEEISTRPFQLVTGRVWKGSAFGGIKGRSEMGGLIKDYQKGALKVEEFITHRRPFKEINQAFEDLHNGDCLRTVLKSDEIK</sequence>
<gene>
    <name type="primary">SFA1</name>
    <name type="synonym">SFA</name>
    <name type="ordered locus">YDL168W</name>
</gene>